<name>HEM1_HELHP</name>
<feature type="chain" id="PRO_0000114031" description="Glutamyl-tRNA reductase">
    <location>
        <begin position="1"/>
        <end position="440"/>
    </location>
</feature>
<feature type="active site" description="Nucleophile" evidence="1">
    <location>
        <position position="56"/>
    </location>
</feature>
<feature type="binding site" evidence="1">
    <location>
        <begin position="55"/>
        <end position="58"/>
    </location>
    <ligand>
        <name>substrate</name>
    </ligand>
</feature>
<feature type="binding site" evidence="1">
    <location>
        <position position="115"/>
    </location>
    <ligand>
        <name>substrate</name>
    </ligand>
</feature>
<feature type="binding site" evidence="1">
    <location>
        <begin position="120"/>
        <end position="122"/>
    </location>
    <ligand>
        <name>substrate</name>
    </ligand>
</feature>
<feature type="binding site" evidence="1">
    <location>
        <position position="126"/>
    </location>
    <ligand>
        <name>substrate</name>
    </ligand>
</feature>
<feature type="binding site" evidence="1">
    <location>
        <begin position="199"/>
        <end position="204"/>
    </location>
    <ligand>
        <name>NADP(+)</name>
        <dbReference type="ChEBI" id="CHEBI:58349"/>
    </ligand>
</feature>
<feature type="site" description="Important for activity" evidence="1">
    <location>
        <position position="105"/>
    </location>
</feature>
<reference key="1">
    <citation type="journal article" date="2003" name="Proc. Natl. Acad. Sci. U.S.A.">
        <title>The complete genome sequence of the carcinogenic bacterium Helicobacter hepaticus.</title>
        <authorList>
            <person name="Suerbaum S."/>
            <person name="Josenhans C."/>
            <person name="Sterzenbach T."/>
            <person name="Drescher B."/>
            <person name="Brandt P."/>
            <person name="Bell M."/>
            <person name="Droege M."/>
            <person name="Fartmann B."/>
            <person name="Fischer H.-P."/>
            <person name="Ge Z."/>
            <person name="Hoerster A."/>
            <person name="Holland R."/>
            <person name="Klein K."/>
            <person name="Koenig J."/>
            <person name="Macko L."/>
            <person name="Mendz G.L."/>
            <person name="Nyakatura G."/>
            <person name="Schauer D.B."/>
            <person name="Shen Z."/>
            <person name="Weber J."/>
            <person name="Frosch M."/>
            <person name="Fox J.G."/>
        </authorList>
    </citation>
    <scope>NUCLEOTIDE SEQUENCE [LARGE SCALE GENOMIC DNA]</scope>
    <source>
        <strain>ATCC 51449 / 3B1</strain>
    </source>
</reference>
<accession>Q7VFF1</accession>
<comment type="function">
    <text evidence="1">Catalyzes the NADPH-dependent reduction of glutamyl-tRNA(Glu) to glutamate 1-semialdehyde (GSA).</text>
</comment>
<comment type="catalytic activity">
    <reaction evidence="1">
        <text>(S)-4-amino-5-oxopentanoate + tRNA(Glu) + NADP(+) = L-glutamyl-tRNA(Glu) + NADPH + H(+)</text>
        <dbReference type="Rhea" id="RHEA:12344"/>
        <dbReference type="Rhea" id="RHEA-COMP:9663"/>
        <dbReference type="Rhea" id="RHEA-COMP:9680"/>
        <dbReference type="ChEBI" id="CHEBI:15378"/>
        <dbReference type="ChEBI" id="CHEBI:57501"/>
        <dbReference type="ChEBI" id="CHEBI:57783"/>
        <dbReference type="ChEBI" id="CHEBI:58349"/>
        <dbReference type="ChEBI" id="CHEBI:78442"/>
        <dbReference type="ChEBI" id="CHEBI:78520"/>
        <dbReference type="EC" id="1.2.1.70"/>
    </reaction>
</comment>
<comment type="pathway">
    <text evidence="1">Porphyrin-containing compound metabolism; protoporphyrin-IX biosynthesis; 5-aminolevulinate from L-glutamyl-tRNA(Glu): step 1/2.</text>
</comment>
<comment type="subunit">
    <text evidence="1">Homodimer.</text>
</comment>
<comment type="domain">
    <text evidence="1">Possesses an unusual extended V-shaped dimeric structure with each monomer consisting of three distinct domains arranged along a curved 'spinal' alpha-helix. The N-terminal catalytic domain specifically recognizes the glutamate moiety of the substrate. The second domain is the NADPH-binding domain, and the third C-terminal domain is responsible for dimerization.</text>
</comment>
<comment type="miscellaneous">
    <text evidence="1">During catalysis, the active site Cys acts as a nucleophile attacking the alpha-carbonyl group of tRNA-bound glutamate with the formation of a thioester intermediate between enzyme and glutamate, and the concomitant release of tRNA(Glu). The thioester intermediate is finally reduced by direct hydride transfer from NADPH, to form the product GSA.</text>
</comment>
<comment type="similarity">
    <text evidence="1">Belongs to the glutamyl-tRNA reductase family.</text>
</comment>
<keyword id="KW-0521">NADP</keyword>
<keyword id="KW-0560">Oxidoreductase</keyword>
<keyword id="KW-0627">Porphyrin biosynthesis</keyword>
<keyword id="KW-1185">Reference proteome</keyword>
<organism>
    <name type="scientific">Helicobacter hepaticus (strain ATCC 51449 / 3B1)</name>
    <dbReference type="NCBI Taxonomy" id="235279"/>
    <lineage>
        <taxon>Bacteria</taxon>
        <taxon>Pseudomonadati</taxon>
        <taxon>Campylobacterota</taxon>
        <taxon>Epsilonproteobacteria</taxon>
        <taxon>Campylobacterales</taxon>
        <taxon>Helicobacteraceae</taxon>
        <taxon>Helicobacter</taxon>
    </lineage>
</organism>
<gene>
    <name evidence="1" type="primary">hemA</name>
    <name type="ordered locus">HH_1725</name>
</gene>
<evidence type="ECO:0000255" key="1">
    <source>
        <dbReference type="HAMAP-Rule" id="MF_00087"/>
    </source>
</evidence>
<protein>
    <recommendedName>
        <fullName evidence="1">Glutamyl-tRNA reductase</fullName>
        <shortName evidence="1">GluTR</shortName>
        <ecNumber evidence="1">1.2.1.70</ecNumber>
    </recommendedName>
</protein>
<dbReference type="EC" id="1.2.1.70" evidence="1"/>
<dbReference type="EMBL" id="AE017125">
    <property type="protein sequence ID" value="AAP78322.1"/>
    <property type="molecule type" value="Genomic_DNA"/>
</dbReference>
<dbReference type="RefSeq" id="WP_011116564.1">
    <property type="nucleotide sequence ID" value="NC_004917.1"/>
</dbReference>
<dbReference type="SMR" id="Q7VFF1"/>
<dbReference type="STRING" id="235279.HH_1725"/>
<dbReference type="KEGG" id="hhe:HH_1725"/>
<dbReference type="eggNOG" id="COG0373">
    <property type="taxonomic scope" value="Bacteria"/>
</dbReference>
<dbReference type="HOGENOM" id="CLU_035113_2_2_7"/>
<dbReference type="OrthoDB" id="110209at2"/>
<dbReference type="UniPathway" id="UPA00251">
    <property type="reaction ID" value="UER00316"/>
</dbReference>
<dbReference type="Proteomes" id="UP000002495">
    <property type="component" value="Chromosome"/>
</dbReference>
<dbReference type="GO" id="GO:0008883">
    <property type="term" value="F:glutamyl-tRNA reductase activity"/>
    <property type="evidence" value="ECO:0007669"/>
    <property type="project" value="UniProtKB-UniRule"/>
</dbReference>
<dbReference type="GO" id="GO:0050661">
    <property type="term" value="F:NADP binding"/>
    <property type="evidence" value="ECO:0007669"/>
    <property type="project" value="InterPro"/>
</dbReference>
<dbReference type="GO" id="GO:0006782">
    <property type="term" value="P:protoporphyrinogen IX biosynthetic process"/>
    <property type="evidence" value="ECO:0007669"/>
    <property type="project" value="UniProtKB-UniRule"/>
</dbReference>
<dbReference type="CDD" id="cd05213">
    <property type="entry name" value="NAD_bind_Glutamyl_tRNA_reduct"/>
    <property type="match status" value="1"/>
</dbReference>
<dbReference type="FunFam" id="3.30.460.30:FF:000001">
    <property type="entry name" value="Glutamyl-tRNA reductase"/>
    <property type="match status" value="1"/>
</dbReference>
<dbReference type="Gene3D" id="3.30.460.30">
    <property type="entry name" value="Glutamyl-tRNA reductase, N-terminal domain"/>
    <property type="match status" value="1"/>
</dbReference>
<dbReference type="Gene3D" id="3.40.50.720">
    <property type="entry name" value="NAD(P)-binding Rossmann-like Domain"/>
    <property type="match status" value="1"/>
</dbReference>
<dbReference type="HAMAP" id="MF_00087">
    <property type="entry name" value="Glu_tRNA_reductase"/>
    <property type="match status" value="1"/>
</dbReference>
<dbReference type="InterPro" id="IPR000343">
    <property type="entry name" value="4pyrrol_synth_GluRdtase"/>
</dbReference>
<dbReference type="InterPro" id="IPR015896">
    <property type="entry name" value="4pyrrol_synth_GluRdtase_dimer"/>
</dbReference>
<dbReference type="InterPro" id="IPR015895">
    <property type="entry name" value="4pyrrol_synth_GluRdtase_N"/>
</dbReference>
<dbReference type="InterPro" id="IPR018214">
    <property type="entry name" value="GluRdtase_CS"/>
</dbReference>
<dbReference type="InterPro" id="IPR036453">
    <property type="entry name" value="GluRdtase_dimer_dom_sf"/>
</dbReference>
<dbReference type="InterPro" id="IPR036343">
    <property type="entry name" value="GluRdtase_N_sf"/>
</dbReference>
<dbReference type="InterPro" id="IPR036291">
    <property type="entry name" value="NAD(P)-bd_dom_sf"/>
</dbReference>
<dbReference type="InterPro" id="IPR006151">
    <property type="entry name" value="Shikm_DH/Glu-tRNA_Rdtase"/>
</dbReference>
<dbReference type="NCBIfam" id="TIGR01035">
    <property type="entry name" value="hemA"/>
    <property type="match status" value="1"/>
</dbReference>
<dbReference type="PANTHER" id="PTHR43120">
    <property type="entry name" value="GLUTAMYL-TRNA REDUCTASE 1, CHLOROPLASTIC"/>
    <property type="match status" value="1"/>
</dbReference>
<dbReference type="PANTHER" id="PTHR43120:SF1">
    <property type="entry name" value="GLUTAMYL-TRNA REDUCTASE 1, CHLOROPLASTIC"/>
    <property type="match status" value="1"/>
</dbReference>
<dbReference type="Pfam" id="PF00745">
    <property type="entry name" value="GlutR_dimer"/>
    <property type="match status" value="1"/>
</dbReference>
<dbReference type="Pfam" id="PF05201">
    <property type="entry name" value="GlutR_N"/>
    <property type="match status" value="1"/>
</dbReference>
<dbReference type="Pfam" id="PF01488">
    <property type="entry name" value="Shikimate_DH"/>
    <property type="match status" value="1"/>
</dbReference>
<dbReference type="PIRSF" id="PIRSF000445">
    <property type="entry name" value="4pyrrol_synth_GluRdtase"/>
    <property type="match status" value="1"/>
</dbReference>
<dbReference type="SUPFAM" id="SSF69742">
    <property type="entry name" value="Glutamyl tRNA-reductase catalytic, N-terminal domain"/>
    <property type="match status" value="1"/>
</dbReference>
<dbReference type="SUPFAM" id="SSF69075">
    <property type="entry name" value="Glutamyl tRNA-reductase dimerization domain"/>
    <property type="match status" value="1"/>
</dbReference>
<dbReference type="SUPFAM" id="SSF51735">
    <property type="entry name" value="NAD(P)-binding Rossmann-fold domains"/>
    <property type="match status" value="1"/>
</dbReference>
<dbReference type="PROSITE" id="PS00747">
    <property type="entry name" value="GLUTR"/>
    <property type="match status" value="1"/>
</dbReference>
<proteinExistence type="inferred from homology"/>
<sequence length="440" mass="50370">MQEKMEVQYMVVSFSHKNVDIATREKLSFSQEEIVPFLQEINVCDSIRESILLCTCNRVELYVSMIDKKRAREHIYECFCTHKNIALEDIKNIALMRLNQYAIYHIFSVASSLDSLVIGETQITGQLKLAYKLAFENALCAKDMTRLMHFAFKCAASVRKETDISAHSVSVASTAVRMAEQKLALCDKTLENLPVLVIGSGEMGRLACKHLQNANAQITLVSRTKENARKLALELDSSINIESWEHLEQLLGQYEVLFSATSAPNCIIQSKMVQVSQKQRWWFDLALPRDIENIQMENLHIFCVDDLEEIVQEHKNAREDSAKKAQKILERYSVEFFKWLQTLGIDPIIKHIRYLAKQSALKELDRAVKKGFLPASYQQNVEKILHGAFNTFLHQPTIRLKQASENPQGDPIIEAMKNVFDISDDVVMLNGYKCEKDTIF</sequence>